<accession>O33105</accession>
<sequence>MIGSLHEIIRLDASTLAAKIVAKELSSVEITQACLDQIEATDDTYRAFLHVAAEKALSAAAAVDKAVAAGGQLSSTLAGVPLALKDVFTTVDMPTTCGSKILQGWHSPYDATVTTRLRAAGIPILGKTNMDEFAMGSSTENSAYGPTRNPWNVDRVPGGSGGGSAAALAAFQAPLAIGSDTGGSIRQPAALTATVGVKPTYGTVSRYGLVACASSLDQGGPCARTVLDTALLHAVIAGHDARDSTSVEAAVPDIVGAAKAGESGDLHGVRVGVVRQLRGEGYQSGVLASFQAAVEQLIALGATVSEVDCPHFDYALAAYYLILPSEVSSNLARFDAMRYGLRVGDDGSRSAEEVIALTRAAGFGPEVKRRIMIGAYALSAGYYDSYYSQAQKVRTLIARDLDKAYRSVDVLVSPATPTTAFSLGEKADDPLAMYLFDLCTLPLNLAGHCGMSVPSGLSSDDDLPVGLQIMAPALADDRLYRVGAAYEAARGPLPSAI</sequence>
<evidence type="ECO:0000250" key="1"/>
<evidence type="ECO:0000305" key="2"/>
<organism>
    <name type="scientific">Mycobacterium leprae (strain TN)</name>
    <dbReference type="NCBI Taxonomy" id="272631"/>
    <lineage>
        <taxon>Bacteria</taxon>
        <taxon>Bacillati</taxon>
        <taxon>Actinomycetota</taxon>
        <taxon>Actinomycetes</taxon>
        <taxon>Mycobacteriales</taxon>
        <taxon>Mycobacteriaceae</taxon>
        <taxon>Mycobacterium</taxon>
    </lineage>
</organism>
<comment type="function">
    <text evidence="1">Allows the formation of correctly charged Gln-tRNA(Gln) through the transamidation of misacylated Glu-tRNA(Gln) in organisms which lack glutaminyl-tRNA synthetase. The reaction takes place in the presence of glutamine and ATP through an activated gamma-phospho-Glu-tRNA(Gln) (By similarity).</text>
</comment>
<comment type="catalytic activity">
    <reaction>
        <text>L-glutamyl-tRNA(Gln) + L-glutamine + ATP + H2O = L-glutaminyl-tRNA(Gln) + L-glutamate + ADP + phosphate + H(+)</text>
        <dbReference type="Rhea" id="RHEA:17521"/>
        <dbReference type="Rhea" id="RHEA-COMP:9681"/>
        <dbReference type="Rhea" id="RHEA-COMP:9684"/>
        <dbReference type="ChEBI" id="CHEBI:15377"/>
        <dbReference type="ChEBI" id="CHEBI:15378"/>
        <dbReference type="ChEBI" id="CHEBI:29985"/>
        <dbReference type="ChEBI" id="CHEBI:30616"/>
        <dbReference type="ChEBI" id="CHEBI:43474"/>
        <dbReference type="ChEBI" id="CHEBI:58359"/>
        <dbReference type="ChEBI" id="CHEBI:78520"/>
        <dbReference type="ChEBI" id="CHEBI:78521"/>
        <dbReference type="ChEBI" id="CHEBI:456216"/>
        <dbReference type="EC" id="6.3.5.7"/>
    </reaction>
</comment>
<comment type="subunit">
    <text evidence="1">Heterotrimer of A, B and C subunits.</text>
</comment>
<comment type="similarity">
    <text evidence="2">Belongs to the amidase family. GatA subfamily.</text>
</comment>
<gene>
    <name type="primary">gatA</name>
    <name type="ordered locus">ML1702</name>
    <name type="ORF">MLCB637.13</name>
</gene>
<reference key="1">
    <citation type="journal article" date="2001" name="Nature">
        <title>Massive gene decay in the leprosy bacillus.</title>
        <authorList>
            <person name="Cole S.T."/>
            <person name="Eiglmeier K."/>
            <person name="Parkhill J."/>
            <person name="James K.D."/>
            <person name="Thomson N.R."/>
            <person name="Wheeler P.R."/>
            <person name="Honore N."/>
            <person name="Garnier T."/>
            <person name="Churcher C.M."/>
            <person name="Harris D.E."/>
            <person name="Mungall K.L."/>
            <person name="Basham D."/>
            <person name="Brown D."/>
            <person name="Chillingworth T."/>
            <person name="Connor R."/>
            <person name="Davies R.M."/>
            <person name="Devlin K."/>
            <person name="Duthoy S."/>
            <person name="Feltwell T."/>
            <person name="Fraser A."/>
            <person name="Hamlin N."/>
            <person name="Holroyd S."/>
            <person name="Hornsby T."/>
            <person name="Jagels K."/>
            <person name="Lacroix C."/>
            <person name="Maclean J."/>
            <person name="Moule S."/>
            <person name="Murphy L.D."/>
            <person name="Oliver K."/>
            <person name="Quail M.A."/>
            <person name="Rajandream M.A."/>
            <person name="Rutherford K.M."/>
            <person name="Rutter S."/>
            <person name="Seeger K."/>
            <person name="Simon S."/>
            <person name="Simmonds M."/>
            <person name="Skelton J."/>
            <person name="Squares R."/>
            <person name="Squares S."/>
            <person name="Stevens K."/>
            <person name="Taylor K."/>
            <person name="Whitehead S."/>
            <person name="Woodward J.R."/>
            <person name="Barrell B.G."/>
        </authorList>
    </citation>
    <scope>NUCLEOTIDE SEQUENCE [LARGE SCALE GENOMIC DNA]</scope>
    <source>
        <strain>TN</strain>
    </source>
</reference>
<name>GATA_MYCLE</name>
<dbReference type="EC" id="6.3.5.7"/>
<dbReference type="EMBL" id="Z99263">
    <property type="protein sequence ID" value="CAB16428.1"/>
    <property type="molecule type" value="Genomic_DNA"/>
</dbReference>
<dbReference type="EMBL" id="AL583923">
    <property type="protein sequence ID" value="CAC30655.1"/>
    <property type="molecule type" value="Genomic_DNA"/>
</dbReference>
<dbReference type="PIR" id="T45406">
    <property type="entry name" value="T45406"/>
</dbReference>
<dbReference type="RefSeq" id="NP_302171.1">
    <property type="nucleotide sequence ID" value="NC_002677.1"/>
</dbReference>
<dbReference type="SMR" id="O33105"/>
<dbReference type="STRING" id="272631.gene:17575547"/>
<dbReference type="KEGG" id="mle:ML1702"/>
<dbReference type="PATRIC" id="fig|272631.5.peg.3210"/>
<dbReference type="Leproma" id="ML1702"/>
<dbReference type="eggNOG" id="COG0154">
    <property type="taxonomic scope" value="Bacteria"/>
</dbReference>
<dbReference type="HOGENOM" id="CLU_009600_0_3_11"/>
<dbReference type="OrthoDB" id="9811471at2"/>
<dbReference type="Proteomes" id="UP000000806">
    <property type="component" value="Chromosome"/>
</dbReference>
<dbReference type="GO" id="GO:0030956">
    <property type="term" value="C:glutamyl-tRNA(Gln) amidotransferase complex"/>
    <property type="evidence" value="ECO:0007669"/>
    <property type="project" value="InterPro"/>
</dbReference>
<dbReference type="GO" id="GO:0005524">
    <property type="term" value="F:ATP binding"/>
    <property type="evidence" value="ECO:0007669"/>
    <property type="project" value="UniProtKB-KW"/>
</dbReference>
<dbReference type="GO" id="GO:0050567">
    <property type="term" value="F:glutaminyl-tRNA synthase (glutamine-hydrolyzing) activity"/>
    <property type="evidence" value="ECO:0007669"/>
    <property type="project" value="UniProtKB-UniRule"/>
</dbReference>
<dbReference type="GO" id="GO:0006412">
    <property type="term" value="P:translation"/>
    <property type="evidence" value="ECO:0007669"/>
    <property type="project" value="UniProtKB-UniRule"/>
</dbReference>
<dbReference type="Gene3D" id="3.90.1300.10">
    <property type="entry name" value="Amidase signature (AS) domain"/>
    <property type="match status" value="1"/>
</dbReference>
<dbReference type="HAMAP" id="MF_00120">
    <property type="entry name" value="GatA"/>
    <property type="match status" value="1"/>
</dbReference>
<dbReference type="InterPro" id="IPR000120">
    <property type="entry name" value="Amidase"/>
</dbReference>
<dbReference type="InterPro" id="IPR020556">
    <property type="entry name" value="Amidase_CS"/>
</dbReference>
<dbReference type="InterPro" id="IPR023631">
    <property type="entry name" value="Amidase_dom"/>
</dbReference>
<dbReference type="InterPro" id="IPR036928">
    <property type="entry name" value="AS_sf"/>
</dbReference>
<dbReference type="InterPro" id="IPR004412">
    <property type="entry name" value="GatA"/>
</dbReference>
<dbReference type="NCBIfam" id="TIGR00132">
    <property type="entry name" value="gatA"/>
    <property type="match status" value="1"/>
</dbReference>
<dbReference type="PANTHER" id="PTHR11895:SF151">
    <property type="entry name" value="GLUTAMYL-TRNA(GLN) AMIDOTRANSFERASE SUBUNIT A"/>
    <property type="match status" value="1"/>
</dbReference>
<dbReference type="PANTHER" id="PTHR11895">
    <property type="entry name" value="TRANSAMIDASE"/>
    <property type="match status" value="1"/>
</dbReference>
<dbReference type="Pfam" id="PF01425">
    <property type="entry name" value="Amidase"/>
    <property type="match status" value="1"/>
</dbReference>
<dbReference type="SUPFAM" id="SSF75304">
    <property type="entry name" value="Amidase signature (AS) enzymes"/>
    <property type="match status" value="1"/>
</dbReference>
<dbReference type="PROSITE" id="PS00571">
    <property type="entry name" value="AMIDASES"/>
    <property type="match status" value="1"/>
</dbReference>
<proteinExistence type="inferred from homology"/>
<feature type="chain" id="PRO_0000105180" description="Glutamyl-tRNA(Gln) amidotransferase subunit A">
    <location>
        <begin position="1"/>
        <end position="497"/>
    </location>
</feature>
<feature type="active site" description="Charge relay system" evidence="1">
    <location>
        <position position="85"/>
    </location>
</feature>
<feature type="active site" description="Charge relay system" evidence="1">
    <location>
        <position position="160"/>
    </location>
</feature>
<feature type="active site" description="Acyl-ester intermediate" evidence="1">
    <location>
        <position position="184"/>
    </location>
</feature>
<keyword id="KW-0067">ATP-binding</keyword>
<keyword id="KW-0436">Ligase</keyword>
<keyword id="KW-0547">Nucleotide-binding</keyword>
<keyword id="KW-0648">Protein biosynthesis</keyword>
<keyword id="KW-1185">Reference proteome</keyword>
<protein>
    <recommendedName>
        <fullName>Glutamyl-tRNA(Gln) amidotransferase subunit A</fullName>
        <shortName>Glu-ADT subunit A</shortName>
        <ecNumber>6.3.5.7</ecNumber>
    </recommendedName>
</protein>